<sequence length="860" mass="97271">MEISSAGPVGAQPLLMVPRRPGYGTMGKPIKLLANCFQVEIPKIDVYLYEVDIKPDKCPRRVNREVVDSMVQHFKVTIFGDRRPVYDGKRSLYTANPLPVATTGVDLDVTLPGEGGKDRPFKVSIKFVSRVSWHLLHEVLTGRTLPEPLEPDKPISTNPVHAVDVVLRHLPSMKYTPVGRSFFSAPEGYDHPLGGGREVWFGFHQSVRPAMWKMMLNIDVSATAFYKAQPVIQFMCEVLDIHNIDEQPRPLTDSHRVKFTKEIKGLKVEVTHCGTMRRKYRVCNVTRRPASHQTFPLQLENGQTVERTVAQYFREKYNLQLKYPHLPCLQVGQEQKHTYLPLEVCNIVAGQRCIKKLTDNQTSTMIKATARSAPDRQEEISRLVRSANYDADPFVQEFQFKVRDEMAHVTGRVLPAPMLQYGGRNRTVATPSHGVWDMRGKQFHTGVEIKMWAIACFATQRQCREEILKGFTDQLRKISKDAGMPIQGQPCFCKYAQGADSVGPMFRHLKNTYSGLQLIIVILPGKTPVYAEVKRAGDTLLGMATQCVQVKNVIKTSPQTLSNLCLKINVKLGGINNILVPHQRPSVFQQPVIFLGADVTHPPAGDGKKPSIAAVVGSMDAHPSRYCATVRVQRPRQEIIQDLASMVRELLIQFYKSTRFKPTRIIFYRDGVSEGQFRQVLYYELLAIREACISLEKDYQPGITYIVVQKRHHTRLFCADRTERVGRSGNIPAGTTVDTDITHPYEFDFYLCSHAGIQGTSRPSHYHVLWDDNCFTADELQLLTYQLCHTYVRCTRSVSIPAPAYYAHLVAFRARYHLVDKEHDSAEGSHVSGQSNGRDPQALAKAVQIHQDTLRTMYFA</sequence>
<reference key="1">
    <citation type="journal article" date="2005" name="Genome Biol.">
        <title>Full-length cDNAs from chicken bursal lymphocytes to facilitate gene function analysis.</title>
        <authorList>
            <person name="Caldwell R.B."/>
            <person name="Kierzek A.M."/>
            <person name="Arakawa H."/>
            <person name="Bezzubov Y."/>
            <person name="Zaim J."/>
            <person name="Fiedler P."/>
            <person name="Kutter S."/>
            <person name="Blagodatski A."/>
            <person name="Kostovska D."/>
            <person name="Koter M."/>
            <person name="Plachy J."/>
            <person name="Carninci P."/>
            <person name="Hayashizaki Y."/>
            <person name="Buerstedde J.-M."/>
        </authorList>
    </citation>
    <scope>NUCLEOTIDE SEQUENCE [LARGE SCALE MRNA]</scope>
    <source>
        <strain>CB</strain>
        <tissue>Bursa of Fabricius</tissue>
    </source>
</reference>
<proteinExistence type="evidence at transcript level"/>
<organism>
    <name type="scientific">Gallus gallus</name>
    <name type="common">Chicken</name>
    <dbReference type="NCBI Taxonomy" id="9031"/>
    <lineage>
        <taxon>Eukaryota</taxon>
        <taxon>Metazoa</taxon>
        <taxon>Chordata</taxon>
        <taxon>Craniata</taxon>
        <taxon>Vertebrata</taxon>
        <taxon>Euteleostomi</taxon>
        <taxon>Archelosauria</taxon>
        <taxon>Archosauria</taxon>
        <taxon>Dinosauria</taxon>
        <taxon>Saurischia</taxon>
        <taxon>Theropoda</taxon>
        <taxon>Coelurosauria</taxon>
        <taxon>Aves</taxon>
        <taxon>Neognathae</taxon>
        <taxon>Galloanserae</taxon>
        <taxon>Galliformes</taxon>
        <taxon>Phasianidae</taxon>
        <taxon>Phasianinae</taxon>
        <taxon>Gallus</taxon>
    </lineage>
</organism>
<keyword id="KW-0963">Cytoplasm</keyword>
<keyword id="KW-0255">Endonuclease</keyword>
<keyword id="KW-0378">Hydrolase</keyword>
<keyword id="KW-0479">Metal-binding</keyword>
<keyword id="KW-0540">Nuclease</keyword>
<keyword id="KW-1185">Reference proteome</keyword>
<keyword id="KW-0687">Ribonucleoprotein</keyword>
<keyword id="KW-0694">RNA-binding</keyword>
<keyword id="KW-0943">RNA-mediated gene silencing</keyword>
<keyword id="KW-0810">Translation regulation</keyword>
<gene>
    <name type="primary">AGO3</name>
    <name type="synonym">EIF2C3</name>
    <name type="ORF">RCJMB04_6f12</name>
</gene>
<accession>Q5ZLG4</accession>
<protein>
    <recommendedName>
        <fullName evidence="2">Protein argonaute-3</fullName>
        <shortName evidence="2">Argonaute3</shortName>
        <ecNumber evidence="1">3.1.26.n2</ecNumber>
    </recommendedName>
    <alternativeName>
        <fullName>Argonaute RISC catalytic component 3</fullName>
    </alternativeName>
    <alternativeName>
        <fullName evidence="2">Eukaryotic translation initiation factor 2C 3</fullName>
        <shortName evidence="2">eIF-2C 3</shortName>
        <shortName evidence="2">eIF2C 3</shortName>
    </alternativeName>
</protein>
<feature type="chain" id="PRO_0000371223" description="Protein argonaute-3">
    <location>
        <begin position="1"/>
        <end position="860"/>
    </location>
</feature>
<feature type="domain" description="PAZ" evidence="3">
    <location>
        <begin position="230"/>
        <end position="349"/>
    </location>
</feature>
<feature type="domain" description="Piwi" evidence="2">
    <location>
        <begin position="518"/>
        <end position="819"/>
    </location>
</feature>
<feature type="region of interest" description="Interaction with guide RNA" evidence="1">
    <location>
        <begin position="530"/>
        <end position="567"/>
    </location>
</feature>
<feature type="region of interest" description="Interaction with guide RNA" evidence="1">
    <location>
        <begin position="758"/>
        <end position="805"/>
    </location>
</feature>
<feature type="binding site" evidence="1">
    <location>
        <position position="598"/>
    </location>
    <ligand>
        <name>a divalent metal cation</name>
        <dbReference type="ChEBI" id="CHEBI:60240"/>
    </ligand>
</feature>
<feature type="binding site" evidence="1">
    <location>
        <position position="638"/>
    </location>
    <ligand>
        <name>a divalent metal cation</name>
        <dbReference type="ChEBI" id="CHEBI:60240"/>
    </ligand>
</feature>
<feature type="binding site" evidence="1">
    <location>
        <position position="670"/>
    </location>
    <ligand>
        <name>a divalent metal cation</name>
        <dbReference type="ChEBI" id="CHEBI:60240"/>
    </ligand>
</feature>
<feature type="binding site" evidence="1">
    <location>
        <position position="808"/>
    </location>
    <ligand>
        <name>a divalent metal cation</name>
        <dbReference type="ChEBI" id="CHEBI:60240"/>
    </ligand>
</feature>
<evidence type="ECO:0000250" key="1">
    <source>
        <dbReference type="UniProtKB" id="Q9H9G7"/>
    </source>
</evidence>
<evidence type="ECO:0000255" key="2">
    <source>
        <dbReference type="HAMAP-Rule" id="MF_03032"/>
    </source>
</evidence>
<evidence type="ECO:0000255" key="3">
    <source>
        <dbReference type="PROSITE-ProRule" id="PRU00142"/>
    </source>
</evidence>
<dbReference type="EC" id="3.1.26.n2" evidence="1"/>
<dbReference type="EMBL" id="AJ719770">
    <property type="protein sequence ID" value="CAG31429.1"/>
    <property type="molecule type" value="mRNA"/>
</dbReference>
<dbReference type="RefSeq" id="NP_001026071.1">
    <property type="nucleotide sequence ID" value="NM_001030900.1"/>
</dbReference>
<dbReference type="SMR" id="Q5ZLG4"/>
<dbReference type="FunCoup" id="Q5ZLG4">
    <property type="interactions" value="2083"/>
</dbReference>
<dbReference type="STRING" id="9031.ENSGALP00000049953"/>
<dbReference type="PaxDb" id="9031-ENSGALP00000003521"/>
<dbReference type="GeneID" id="419628"/>
<dbReference type="KEGG" id="gga:419628"/>
<dbReference type="CTD" id="192669"/>
<dbReference type="VEuPathDB" id="HostDB:geneid_419628"/>
<dbReference type="eggNOG" id="KOG1041">
    <property type="taxonomic scope" value="Eukaryota"/>
</dbReference>
<dbReference type="InParanoid" id="Q5ZLG4"/>
<dbReference type="OrthoDB" id="10252740at2759"/>
<dbReference type="PhylomeDB" id="Q5ZLG4"/>
<dbReference type="PRO" id="PR:Q5ZLG4"/>
<dbReference type="Proteomes" id="UP000000539">
    <property type="component" value="Unassembled WGS sequence"/>
</dbReference>
<dbReference type="GO" id="GO:0005737">
    <property type="term" value="C:cytoplasm"/>
    <property type="evidence" value="ECO:0000318"/>
    <property type="project" value="GO_Central"/>
</dbReference>
<dbReference type="GO" id="GO:0036464">
    <property type="term" value="C:cytoplasmic ribonucleoprotein granule"/>
    <property type="evidence" value="ECO:0000318"/>
    <property type="project" value="GO_Central"/>
</dbReference>
<dbReference type="GO" id="GO:0005634">
    <property type="term" value="C:nucleus"/>
    <property type="evidence" value="ECO:0000318"/>
    <property type="project" value="GO_Central"/>
</dbReference>
<dbReference type="GO" id="GO:0000932">
    <property type="term" value="C:P-body"/>
    <property type="evidence" value="ECO:0007669"/>
    <property type="project" value="UniProtKB-SubCell"/>
</dbReference>
<dbReference type="GO" id="GO:0016442">
    <property type="term" value="C:RISC complex"/>
    <property type="evidence" value="ECO:0000318"/>
    <property type="project" value="GO_Central"/>
</dbReference>
<dbReference type="GO" id="GO:0090624">
    <property type="term" value="F:endoribonuclease activity, cleaving miRNA-paired mRNA"/>
    <property type="evidence" value="ECO:0000250"/>
    <property type="project" value="UniProtKB"/>
</dbReference>
<dbReference type="GO" id="GO:0046872">
    <property type="term" value="F:metal ion binding"/>
    <property type="evidence" value="ECO:0007669"/>
    <property type="project" value="UniProtKB-KW"/>
</dbReference>
<dbReference type="GO" id="GO:0035198">
    <property type="term" value="F:miRNA binding"/>
    <property type="evidence" value="ECO:0000318"/>
    <property type="project" value="GO_Central"/>
</dbReference>
<dbReference type="GO" id="GO:0004521">
    <property type="term" value="F:RNA endonuclease activity"/>
    <property type="evidence" value="ECO:0000250"/>
    <property type="project" value="UniProtKB"/>
</dbReference>
<dbReference type="GO" id="GO:0003727">
    <property type="term" value="F:single-stranded RNA binding"/>
    <property type="evidence" value="ECO:0000318"/>
    <property type="project" value="GO_Central"/>
</dbReference>
<dbReference type="GO" id="GO:0035278">
    <property type="term" value="P:miRNA-mediated gene silencing by inhibition of translation"/>
    <property type="evidence" value="ECO:0000250"/>
    <property type="project" value="UniProtKB"/>
</dbReference>
<dbReference type="GO" id="GO:0006402">
    <property type="term" value="P:mRNA catabolic process"/>
    <property type="evidence" value="ECO:0000250"/>
    <property type="project" value="UniProtKB"/>
</dbReference>
<dbReference type="GO" id="GO:0031054">
    <property type="term" value="P:pre-miRNA processing"/>
    <property type="evidence" value="ECO:0000318"/>
    <property type="project" value="GO_Central"/>
</dbReference>
<dbReference type="GO" id="GO:0072091">
    <property type="term" value="P:regulation of stem cell proliferation"/>
    <property type="evidence" value="ECO:0007669"/>
    <property type="project" value="InterPro"/>
</dbReference>
<dbReference type="GO" id="GO:0035194">
    <property type="term" value="P:regulatory ncRNA-mediated post-transcriptional gene silencing"/>
    <property type="evidence" value="ECO:0000318"/>
    <property type="project" value="GO_Central"/>
</dbReference>
<dbReference type="CDD" id="cd02846">
    <property type="entry name" value="PAZ_argonaute_like"/>
    <property type="match status" value="1"/>
</dbReference>
<dbReference type="CDD" id="cd04657">
    <property type="entry name" value="Piwi_ago-like"/>
    <property type="match status" value="1"/>
</dbReference>
<dbReference type="FunFam" id="2.170.260.10:FF:000001">
    <property type="entry name" value="Protein argonaute-2"/>
    <property type="match status" value="1"/>
</dbReference>
<dbReference type="FunFam" id="3.30.420.10:FF:000001">
    <property type="entry name" value="Protein argonaute-2"/>
    <property type="match status" value="1"/>
</dbReference>
<dbReference type="FunFam" id="3.40.50.2300:FF:000005">
    <property type="entry name" value="Protein argonaute-2"/>
    <property type="match status" value="1"/>
</dbReference>
<dbReference type="Gene3D" id="3.40.50.2300">
    <property type="match status" value="1"/>
</dbReference>
<dbReference type="Gene3D" id="2.170.260.10">
    <property type="entry name" value="paz domain"/>
    <property type="match status" value="1"/>
</dbReference>
<dbReference type="Gene3D" id="3.30.420.10">
    <property type="entry name" value="Ribonuclease H-like superfamily/Ribonuclease H"/>
    <property type="match status" value="1"/>
</dbReference>
<dbReference type="HAMAP" id="MF_03032">
    <property type="entry name" value="AGO3"/>
    <property type="match status" value="1"/>
</dbReference>
<dbReference type="InterPro" id="IPR028603">
    <property type="entry name" value="AGO3"/>
</dbReference>
<dbReference type="InterPro" id="IPR014811">
    <property type="entry name" value="ArgoL1"/>
</dbReference>
<dbReference type="InterPro" id="IPR032472">
    <property type="entry name" value="ArgoL2"/>
</dbReference>
<dbReference type="InterPro" id="IPR032473">
    <property type="entry name" value="Argonaute_Mid_dom"/>
</dbReference>
<dbReference type="InterPro" id="IPR032474">
    <property type="entry name" value="Argonaute_N"/>
</dbReference>
<dbReference type="InterPro" id="IPR003100">
    <property type="entry name" value="PAZ_dom"/>
</dbReference>
<dbReference type="InterPro" id="IPR036085">
    <property type="entry name" value="PAZ_dom_sf"/>
</dbReference>
<dbReference type="InterPro" id="IPR003165">
    <property type="entry name" value="Piwi"/>
</dbReference>
<dbReference type="InterPro" id="IPR045246">
    <property type="entry name" value="Piwi_ago-like"/>
</dbReference>
<dbReference type="InterPro" id="IPR012337">
    <property type="entry name" value="RNaseH-like_sf"/>
</dbReference>
<dbReference type="InterPro" id="IPR036397">
    <property type="entry name" value="RNaseH_sf"/>
</dbReference>
<dbReference type="PANTHER" id="PTHR22891">
    <property type="entry name" value="EUKARYOTIC TRANSLATION INITIATION FACTOR 2C"/>
    <property type="match status" value="1"/>
</dbReference>
<dbReference type="Pfam" id="PF08699">
    <property type="entry name" value="ArgoL1"/>
    <property type="match status" value="1"/>
</dbReference>
<dbReference type="Pfam" id="PF16488">
    <property type="entry name" value="ArgoL2"/>
    <property type="match status" value="1"/>
</dbReference>
<dbReference type="Pfam" id="PF16487">
    <property type="entry name" value="ArgoMid"/>
    <property type="match status" value="1"/>
</dbReference>
<dbReference type="Pfam" id="PF16486">
    <property type="entry name" value="ArgoN"/>
    <property type="match status" value="1"/>
</dbReference>
<dbReference type="Pfam" id="PF02170">
    <property type="entry name" value="PAZ"/>
    <property type="match status" value="1"/>
</dbReference>
<dbReference type="Pfam" id="PF02171">
    <property type="entry name" value="Piwi"/>
    <property type="match status" value="1"/>
</dbReference>
<dbReference type="SMART" id="SM01163">
    <property type="entry name" value="DUF1785"/>
    <property type="match status" value="1"/>
</dbReference>
<dbReference type="SMART" id="SM00949">
    <property type="entry name" value="PAZ"/>
    <property type="match status" value="1"/>
</dbReference>
<dbReference type="SMART" id="SM00950">
    <property type="entry name" value="Piwi"/>
    <property type="match status" value="1"/>
</dbReference>
<dbReference type="SUPFAM" id="SSF101690">
    <property type="entry name" value="PAZ domain"/>
    <property type="match status" value="1"/>
</dbReference>
<dbReference type="SUPFAM" id="SSF53098">
    <property type="entry name" value="Ribonuclease H-like"/>
    <property type="match status" value="1"/>
</dbReference>
<dbReference type="PROSITE" id="PS50821">
    <property type="entry name" value="PAZ"/>
    <property type="match status" value="1"/>
</dbReference>
<dbReference type="PROSITE" id="PS50822">
    <property type="entry name" value="PIWI"/>
    <property type="match status" value="1"/>
</dbReference>
<name>AGO3_CHICK</name>
<comment type="function">
    <text evidence="2">Required for RNA-mediated gene silencing (RNAi). Binds to short RNAs such as microRNAs (miRNAs) and represses the translation of mRNAs which are complementary to them. Possesses RNA slicer activity but only on select RNAs bearing 5'- and 3'-flanking sequences to the region of guide-target complementarity.</text>
</comment>
<comment type="catalytic activity">
    <reaction evidence="1">
        <text>Endonucleolytic cleavage to 5'-phosphomonoester.</text>
        <dbReference type="EC" id="3.1.26.n2"/>
    </reaction>
</comment>
<comment type="subcellular location">
    <subcellularLocation>
        <location evidence="2">Cytoplasm</location>
        <location evidence="2">P-body</location>
    </subcellularLocation>
</comment>
<comment type="similarity">
    <text evidence="2">Belongs to the argonaute family. Ago subfamily.</text>
</comment>